<organism>
    <name type="scientific">Pseudomonas entomophila (strain L48)</name>
    <dbReference type="NCBI Taxonomy" id="384676"/>
    <lineage>
        <taxon>Bacteria</taxon>
        <taxon>Pseudomonadati</taxon>
        <taxon>Pseudomonadota</taxon>
        <taxon>Gammaproteobacteria</taxon>
        <taxon>Pseudomonadales</taxon>
        <taxon>Pseudomonadaceae</taxon>
        <taxon>Pseudomonas</taxon>
    </lineage>
</organism>
<reference key="1">
    <citation type="journal article" date="2006" name="Nat. Biotechnol.">
        <title>Complete genome sequence of the entomopathogenic and metabolically versatile soil bacterium Pseudomonas entomophila.</title>
        <authorList>
            <person name="Vodovar N."/>
            <person name="Vallenet D."/>
            <person name="Cruveiller S."/>
            <person name="Rouy Z."/>
            <person name="Barbe V."/>
            <person name="Acosta C."/>
            <person name="Cattolico L."/>
            <person name="Jubin C."/>
            <person name="Lajus A."/>
            <person name="Segurens B."/>
            <person name="Vacherie B."/>
            <person name="Wincker P."/>
            <person name="Weissenbach J."/>
            <person name="Lemaitre B."/>
            <person name="Medigue C."/>
            <person name="Boccard F."/>
        </authorList>
    </citation>
    <scope>NUCLEOTIDE SEQUENCE [LARGE SCALE GENOMIC DNA]</scope>
    <source>
        <strain>L48</strain>
    </source>
</reference>
<sequence length="1357" mass="150754">MAYSYTEKKRIRKDFSKLPDVMDVPYLLAIQLDSYREFLQAGASKDQFRDVGLHAAFKSVFPIISYSGNAALEYVGYRLGEPAFDVKECVLRGVTFAVPLRVKVRLIIFDKESSNKAIKDIKEQEVYMGEIPLMTENGTFVINGTERVIVSQLHRSPGVFFDHDRGKTHSSGKLLYSARIIPYRGSWLDFEFDPKDCVFVRIDRRRKLPASVLLRALGYSTEEVLNTFYTTNVFHLSGEKLSLELVPQRLRGEVAVMDIHDGSGKVIVEQGRRITARHINQLEKAGVKELDVPLEYVLGRTTAKAIVHPATGEILAECNTELTTDLLVKIAKAQVVRIETLYTNDIDCGPFISDTLKIDTTSNQLEALVEIYRMMRPGEPPTKDAAETLFNNLFFSAERYDLSAVGRMKFNRRIGRTEIEGSGVLSKEDIVEVLKTLVDIRNGKGIVDDIDHLGNRRVRCVGEMAENQFRVGLVRVERAVKERLSMAESEGLMPQDLINAKPVAAAVKEFFGSSQLSQFMGQNNPLSEITHKRRVSALGPGGLTRERAGFEVRDVHPTHYGRVCPIETPEGPNIGLINSLAAYARTNQYGFLESPYRVVKEGVVSDDIVFLSAIEEADHVIAQASAAMNEKKQLIDELVAVRHLNEFTVKAPEDVTLMDVSPKQVVSVAASLIPFLEHDDANRALMGSNMQRQAVPTLRADKPLVGTGMERNVARDSGVCVVARRGGVIDSVDASRIVVRVADDEVETGEAGVDIYNLTKYTRSNQNTCINQRPLVSKGDVVARGDIMADGPSTDMGELALGQNMRIAFMAWNGFNFEDSICLSERVVQEDRFTTIHIQELTCVARDTKLGPEEITADIPNVGEAALNKLDEAGIVYVGAEVGAGDILVGKVTPKGETQLTPEEKLLRAIFGEKASDVKDTSLRVPTGTKGTVIDVQVFTRDGVERDSRALAIEKMQLDEIRKDLNEEFRIVEGATFERLRAALNGQVVDGGAGLKKGTVITDDVLNGLEHGQWFKLRMAEDALNEQLEKAQQYIVDRRRLLDDKFEDKKRKLQQGDDLAPGVLKIVKVYLAIRRRIQPGDKMAGRHGNKGVVSVIMPVEDMPHDANGTPVDVVLNPLGVPSRMNVGQILETHLGLAAKGLGEKIDRMIEEQRKAAELRTFLTEIYNEIGGRQENLEEFTDEEIMALANNLKKGVPMATPVFDGAKEREIKAMLKLADLPESGQMQLFDGRTGNKFERSVTVGYMYMLKLNHLVDDKMHARSTGSYSLVTQQPLGGKAQFGGQRFGEMEVWALEAYGAAYTLQEMLTVKSDDVNGRTKMYKNIVDGDHRMEPGMPESFNVLIKEIRSLGIDIDLETE</sequence>
<dbReference type="EC" id="2.7.7.6" evidence="1"/>
<dbReference type="EMBL" id="CT573326">
    <property type="protein sequence ID" value="CAK13429.1"/>
    <property type="molecule type" value="Genomic_DNA"/>
</dbReference>
<dbReference type="RefSeq" id="WP_011531884.1">
    <property type="nucleotide sequence ID" value="NC_008027.1"/>
</dbReference>
<dbReference type="SMR" id="Q1IFX3"/>
<dbReference type="STRING" id="384676.PSEEN0482"/>
<dbReference type="GeneID" id="32803818"/>
<dbReference type="KEGG" id="pen:PSEEN0482"/>
<dbReference type="eggNOG" id="COG0085">
    <property type="taxonomic scope" value="Bacteria"/>
</dbReference>
<dbReference type="HOGENOM" id="CLU_000524_4_0_6"/>
<dbReference type="OrthoDB" id="9803954at2"/>
<dbReference type="Proteomes" id="UP000000658">
    <property type="component" value="Chromosome"/>
</dbReference>
<dbReference type="GO" id="GO:0000428">
    <property type="term" value="C:DNA-directed RNA polymerase complex"/>
    <property type="evidence" value="ECO:0007669"/>
    <property type="project" value="UniProtKB-KW"/>
</dbReference>
<dbReference type="GO" id="GO:0003677">
    <property type="term" value="F:DNA binding"/>
    <property type="evidence" value="ECO:0007669"/>
    <property type="project" value="UniProtKB-UniRule"/>
</dbReference>
<dbReference type="GO" id="GO:0003899">
    <property type="term" value="F:DNA-directed RNA polymerase activity"/>
    <property type="evidence" value="ECO:0007669"/>
    <property type="project" value="UniProtKB-UniRule"/>
</dbReference>
<dbReference type="GO" id="GO:0032549">
    <property type="term" value="F:ribonucleoside binding"/>
    <property type="evidence" value="ECO:0007669"/>
    <property type="project" value="InterPro"/>
</dbReference>
<dbReference type="GO" id="GO:0006351">
    <property type="term" value="P:DNA-templated transcription"/>
    <property type="evidence" value="ECO:0007669"/>
    <property type="project" value="UniProtKB-UniRule"/>
</dbReference>
<dbReference type="CDD" id="cd00653">
    <property type="entry name" value="RNA_pol_B_RPB2"/>
    <property type="match status" value="1"/>
</dbReference>
<dbReference type="FunFam" id="2.40.50.100:FF:000006">
    <property type="entry name" value="DNA-directed RNA polymerase subunit beta"/>
    <property type="match status" value="1"/>
</dbReference>
<dbReference type="FunFam" id="2.40.50.150:FF:000001">
    <property type="entry name" value="DNA-directed RNA polymerase subunit beta"/>
    <property type="match status" value="1"/>
</dbReference>
<dbReference type="FunFam" id="3.90.1110.10:FF:000001">
    <property type="entry name" value="DNA-directed RNA polymerase subunit beta"/>
    <property type="match status" value="1"/>
</dbReference>
<dbReference type="FunFam" id="3.90.1110.10:FF:000004">
    <property type="entry name" value="DNA-directed RNA polymerase subunit beta"/>
    <property type="match status" value="1"/>
</dbReference>
<dbReference type="FunFam" id="3.90.1800.10:FF:000001">
    <property type="entry name" value="DNA-directed RNA polymerase subunit beta"/>
    <property type="match status" value="1"/>
</dbReference>
<dbReference type="Gene3D" id="2.40.50.100">
    <property type="match status" value="1"/>
</dbReference>
<dbReference type="Gene3D" id="2.40.50.150">
    <property type="match status" value="1"/>
</dbReference>
<dbReference type="Gene3D" id="3.90.1100.10">
    <property type="match status" value="2"/>
</dbReference>
<dbReference type="Gene3D" id="2.30.150.10">
    <property type="entry name" value="DNA-directed RNA polymerase, beta subunit, external 1 domain"/>
    <property type="match status" value="1"/>
</dbReference>
<dbReference type="Gene3D" id="2.40.270.10">
    <property type="entry name" value="DNA-directed RNA polymerase, subunit 2, domain 6"/>
    <property type="match status" value="1"/>
</dbReference>
<dbReference type="Gene3D" id="3.90.1800.10">
    <property type="entry name" value="RNA polymerase alpha subunit dimerisation domain"/>
    <property type="match status" value="1"/>
</dbReference>
<dbReference type="Gene3D" id="3.90.1110.10">
    <property type="entry name" value="RNA polymerase Rpb2, domain 2"/>
    <property type="match status" value="1"/>
</dbReference>
<dbReference type="HAMAP" id="MF_01321">
    <property type="entry name" value="RNApol_bact_RpoB"/>
    <property type="match status" value="1"/>
</dbReference>
<dbReference type="InterPro" id="IPR042107">
    <property type="entry name" value="DNA-dir_RNA_pol_bsu_ext_1_sf"/>
</dbReference>
<dbReference type="InterPro" id="IPR019462">
    <property type="entry name" value="DNA-dir_RNA_pol_bsu_external_1"/>
</dbReference>
<dbReference type="InterPro" id="IPR015712">
    <property type="entry name" value="DNA-dir_RNA_pol_su2"/>
</dbReference>
<dbReference type="InterPro" id="IPR007120">
    <property type="entry name" value="DNA-dir_RNAP_su2_dom"/>
</dbReference>
<dbReference type="InterPro" id="IPR037033">
    <property type="entry name" value="DNA-dir_RNAP_su2_hyb_sf"/>
</dbReference>
<dbReference type="InterPro" id="IPR010243">
    <property type="entry name" value="RNA_pol_bsu_bac"/>
</dbReference>
<dbReference type="InterPro" id="IPR007121">
    <property type="entry name" value="RNA_pol_bsu_CS"/>
</dbReference>
<dbReference type="InterPro" id="IPR007644">
    <property type="entry name" value="RNA_pol_bsu_protrusion"/>
</dbReference>
<dbReference type="InterPro" id="IPR007642">
    <property type="entry name" value="RNA_pol_Rpb2_2"/>
</dbReference>
<dbReference type="InterPro" id="IPR037034">
    <property type="entry name" value="RNA_pol_Rpb2_2_sf"/>
</dbReference>
<dbReference type="InterPro" id="IPR007645">
    <property type="entry name" value="RNA_pol_Rpb2_3"/>
</dbReference>
<dbReference type="InterPro" id="IPR007641">
    <property type="entry name" value="RNA_pol_Rpb2_7"/>
</dbReference>
<dbReference type="InterPro" id="IPR014724">
    <property type="entry name" value="RNA_pol_RPB2_OB-fold"/>
</dbReference>
<dbReference type="NCBIfam" id="NF001616">
    <property type="entry name" value="PRK00405.1"/>
    <property type="match status" value="1"/>
</dbReference>
<dbReference type="NCBIfam" id="TIGR02013">
    <property type="entry name" value="rpoB"/>
    <property type="match status" value="1"/>
</dbReference>
<dbReference type="PANTHER" id="PTHR20856">
    <property type="entry name" value="DNA-DIRECTED RNA POLYMERASE I SUBUNIT 2"/>
    <property type="match status" value="1"/>
</dbReference>
<dbReference type="Pfam" id="PF04563">
    <property type="entry name" value="RNA_pol_Rpb2_1"/>
    <property type="match status" value="1"/>
</dbReference>
<dbReference type="Pfam" id="PF04561">
    <property type="entry name" value="RNA_pol_Rpb2_2"/>
    <property type="match status" value="2"/>
</dbReference>
<dbReference type="Pfam" id="PF04565">
    <property type="entry name" value="RNA_pol_Rpb2_3"/>
    <property type="match status" value="1"/>
</dbReference>
<dbReference type="Pfam" id="PF10385">
    <property type="entry name" value="RNA_pol_Rpb2_45"/>
    <property type="match status" value="1"/>
</dbReference>
<dbReference type="Pfam" id="PF00562">
    <property type="entry name" value="RNA_pol_Rpb2_6"/>
    <property type="match status" value="1"/>
</dbReference>
<dbReference type="Pfam" id="PF04560">
    <property type="entry name" value="RNA_pol_Rpb2_7"/>
    <property type="match status" value="1"/>
</dbReference>
<dbReference type="SUPFAM" id="SSF64484">
    <property type="entry name" value="beta and beta-prime subunits of DNA dependent RNA-polymerase"/>
    <property type="match status" value="1"/>
</dbReference>
<dbReference type="PROSITE" id="PS01166">
    <property type="entry name" value="RNA_POL_BETA"/>
    <property type="match status" value="1"/>
</dbReference>
<accession>Q1IFX3</accession>
<evidence type="ECO:0000255" key="1">
    <source>
        <dbReference type="HAMAP-Rule" id="MF_01321"/>
    </source>
</evidence>
<name>RPOB_PSEE4</name>
<gene>
    <name evidence="1" type="primary">rpoB</name>
    <name type="ordered locus">PSEEN0482</name>
</gene>
<comment type="function">
    <text evidence="1">DNA-dependent RNA polymerase catalyzes the transcription of DNA into RNA using the four ribonucleoside triphosphates as substrates.</text>
</comment>
<comment type="catalytic activity">
    <reaction evidence="1">
        <text>RNA(n) + a ribonucleoside 5'-triphosphate = RNA(n+1) + diphosphate</text>
        <dbReference type="Rhea" id="RHEA:21248"/>
        <dbReference type="Rhea" id="RHEA-COMP:14527"/>
        <dbReference type="Rhea" id="RHEA-COMP:17342"/>
        <dbReference type="ChEBI" id="CHEBI:33019"/>
        <dbReference type="ChEBI" id="CHEBI:61557"/>
        <dbReference type="ChEBI" id="CHEBI:140395"/>
        <dbReference type="EC" id="2.7.7.6"/>
    </reaction>
</comment>
<comment type="subunit">
    <text evidence="1">The RNAP catalytic core consists of 2 alpha, 1 beta, 1 beta' and 1 omega subunit. When a sigma factor is associated with the core the holoenzyme is formed, which can initiate transcription.</text>
</comment>
<comment type="similarity">
    <text evidence="1">Belongs to the RNA polymerase beta chain family.</text>
</comment>
<protein>
    <recommendedName>
        <fullName evidence="1">DNA-directed RNA polymerase subunit beta</fullName>
        <shortName evidence="1">RNAP subunit beta</shortName>
        <ecNumber evidence="1">2.7.7.6</ecNumber>
    </recommendedName>
    <alternativeName>
        <fullName evidence="1">RNA polymerase subunit beta</fullName>
    </alternativeName>
    <alternativeName>
        <fullName evidence="1">Transcriptase subunit beta</fullName>
    </alternativeName>
</protein>
<feature type="chain" id="PRO_0000300376" description="DNA-directed RNA polymerase subunit beta">
    <location>
        <begin position="1"/>
        <end position="1357"/>
    </location>
</feature>
<proteinExistence type="inferred from homology"/>
<keyword id="KW-0240">DNA-directed RNA polymerase</keyword>
<keyword id="KW-0548">Nucleotidyltransferase</keyword>
<keyword id="KW-0804">Transcription</keyword>
<keyword id="KW-0808">Transferase</keyword>